<evidence type="ECO:0000255" key="1">
    <source>
        <dbReference type="HAMAP-Rule" id="MF_01347"/>
    </source>
</evidence>
<feature type="chain" id="PRO_1000055126" description="ATP synthase subunit beta">
    <location>
        <begin position="1"/>
        <end position="479"/>
    </location>
</feature>
<feature type="binding site" evidence="1">
    <location>
        <begin position="153"/>
        <end position="160"/>
    </location>
    <ligand>
        <name>ATP</name>
        <dbReference type="ChEBI" id="CHEBI:30616"/>
    </ligand>
</feature>
<gene>
    <name evidence="1" type="primary">atpD</name>
    <name type="ordered locus">LBUL_0643</name>
</gene>
<sequence length="479" mass="52224">MSQGEIVQVIGPVVDVKFSIGKDLPDINNALKVIKSDDDSIILEVILEQGDGVLRCIAMESTDGLRRGMKVEDTGSSISVPVGPDTLGRVFNVLGQPIDGGPEFPADHPRSGIHKEAPKYDELTTSREILETGIKVIDLLEPYLRGGKVGLFGGAGVGKTTIIQELIHNIAQEHNGISVFTGVGERTREGNDLYFEMKASGVLDKTAMVFGQMNEPPGARMRVALTGLTIAEYFRDVEGQDVLLFIDNIFRFTQAGSEVSALLGRIPSAVGYQPTLATEMGQLQERITSTKKGSITSIQAVYVPADDYTDPAPATTFAYLDATTNLERSLVEQGIYPAVDPLESTSSALDPEIVGQEHYDVATRVQHILQRYRELQDIISVLGMDELSDEEKLIVARARRIQFFLSQNFFVAEVFTSVPGSYVPIKETIKGFKMILDGHLDDLPEDAFRGVGPIEDVLKKALKMGVTPSDPEAKALLEK</sequence>
<comment type="function">
    <text evidence="1">Produces ATP from ADP in the presence of a proton gradient across the membrane. The catalytic sites are hosted primarily by the beta subunits.</text>
</comment>
<comment type="catalytic activity">
    <reaction evidence="1">
        <text>ATP + H2O + 4 H(+)(in) = ADP + phosphate + 5 H(+)(out)</text>
        <dbReference type="Rhea" id="RHEA:57720"/>
        <dbReference type="ChEBI" id="CHEBI:15377"/>
        <dbReference type="ChEBI" id="CHEBI:15378"/>
        <dbReference type="ChEBI" id="CHEBI:30616"/>
        <dbReference type="ChEBI" id="CHEBI:43474"/>
        <dbReference type="ChEBI" id="CHEBI:456216"/>
        <dbReference type="EC" id="7.1.2.2"/>
    </reaction>
</comment>
<comment type="subunit">
    <text evidence="1">F-type ATPases have 2 components, CF(1) - the catalytic core - and CF(0) - the membrane proton channel. CF(1) has five subunits: alpha(3), beta(3), gamma(1), delta(1), epsilon(1). CF(0) has three main subunits: a(1), b(2) and c(9-12). The alpha and beta chains form an alternating ring which encloses part of the gamma chain. CF(1) is attached to CF(0) by a central stalk formed by the gamma and epsilon chains, while a peripheral stalk is formed by the delta and b chains.</text>
</comment>
<comment type="subcellular location">
    <subcellularLocation>
        <location evidence="1">Cell membrane</location>
        <topology evidence="1">Peripheral membrane protein</topology>
    </subcellularLocation>
</comment>
<comment type="similarity">
    <text evidence="1">Belongs to the ATPase alpha/beta chains family.</text>
</comment>
<reference key="1">
    <citation type="journal article" date="2006" name="Proc. Natl. Acad. Sci. U.S.A.">
        <title>Comparative genomics of the lactic acid bacteria.</title>
        <authorList>
            <person name="Makarova K.S."/>
            <person name="Slesarev A."/>
            <person name="Wolf Y.I."/>
            <person name="Sorokin A."/>
            <person name="Mirkin B."/>
            <person name="Koonin E.V."/>
            <person name="Pavlov A."/>
            <person name="Pavlova N."/>
            <person name="Karamychev V."/>
            <person name="Polouchine N."/>
            <person name="Shakhova V."/>
            <person name="Grigoriev I."/>
            <person name="Lou Y."/>
            <person name="Rohksar D."/>
            <person name="Lucas S."/>
            <person name="Huang K."/>
            <person name="Goodstein D.M."/>
            <person name="Hawkins T."/>
            <person name="Plengvidhya V."/>
            <person name="Welker D."/>
            <person name="Hughes J."/>
            <person name="Goh Y."/>
            <person name="Benson A."/>
            <person name="Baldwin K."/>
            <person name="Lee J.-H."/>
            <person name="Diaz-Muniz I."/>
            <person name="Dosti B."/>
            <person name="Smeianov V."/>
            <person name="Wechter W."/>
            <person name="Barabote R."/>
            <person name="Lorca G."/>
            <person name="Altermann E."/>
            <person name="Barrangou R."/>
            <person name="Ganesan B."/>
            <person name="Xie Y."/>
            <person name="Rawsthorne H."/>
            <person name="Tamir D."/>
            <person name="Parker C."/>
            <person name="Breidt F."/>
            <person name="Broadbent J.R."/>
            <person name="Hutkins R."/>
            <person name="O'Sullivan D."/>
            <person name="Steele J."/>
            <person name="Unlu G."/>
            <person name="Saier M.H. Jr."/>
            <person name="Klaenhammer T."/>
            <person name="Richardson P."/>
            <person name="Kozyavkin S."/>
            <person name="Weimer B.C."/>
            <person name="Mills D.A."/>
        </authorList>
    </citation>
    <scope>NUCLEOTIDE SEQUENCE [LARGE SCALE GENOMIC DNA]</scope>
    <source>
        <strain>ATCC BAA-365 / Lb-18</strain>
    </source>
</reference>
<name>ATPB_LACDB</name>
<accession>Q04BA3</accession>
<proteinExistence type="inferred from homology"/>
<dbReference type="EC" id="7.1.2.2" evidence="1"/>
<dbReference type="EMBL" id="CP000412">
    <property type="protein sequence ID" value="ABJ58269.1"/>
    <property type="molecule type" value="Genomic_DNA"/>
</dbReference>
<dbReference type="RefSeq" id="WP_011678121.1">
    <property type="nucleotide sequence ID" value="NC_008529.1"/>
</dbReference>
<dbReference type="SMR" id="Q04BA3"/>
<dbReference type="KEGG" id="lbu:LBUL_0643"/>
<dbReference type="HOGENOM" id="CLU_022398_0_2_9"/>
<dbReference type="BioCyc" id="LDEL321956:LBUL_RS03060-MONOMER"/>
<dbReference type="GO" id="GO:0005886">
    <property type="term" value="C:plasma membrane"/>
    <property type="evidence" value="ECO:0007669"/>
    <property type="project" value="UniProtKB-SubCell"/>
</dbReference>
<dbReference type="GO" id="GO:0045259">
    <property type="term" value="C:proton-transporting ATP synthase complex"/>
    <property type="evidence" value="ECO:0007669"/>
    <property type="project" value="UniProtKB-KW"/>
</dbReference>
<dbReference type="GO" id="GO:0005524">
    <property type="term" value="F:ATP binding"/>
    <property type="evidence" value="ECO:0007669"/>
    <property type="project" value="UniProtKB-UniRule"/>
</dbReference>
<dbReference type="GO" id="GO:0016887">
    <property type="term" value="F:ATP hydrolysis activity"/>
    <property type="evidence" value="ECO:0007669"/>
    <property type="project" value="InterPro"/>
</dbReference>
<dbReference type="GO" id="GO:0046933">
    <property type="term" value="F:proton-transporting ATP synthase activity, rotational mechanism"/>
    <property type="evidence" value="ECO:0007669"/>
    <property type="project" value="UniProtKB-UniRule"/>
</dbReference>
<dbReference type="CDD" id="cd18110">
    <property type="entry name" value="ATP-synt_F1_beta_C"/>
    <property type="match status" value="1"/>
</dbReference>
<dbReference type="CDD" id="cd18115">
    <property type="entry name" value="ATP-synt_F1_beta_N"/>
    <property type="match status" value="1"/>
</dbReference>
<dbReference type="CDD" id="cd01133">
    <property type="entry name" value="F1-ATPase_beta_CD"/>
    <property type="match status" value="1"/>
</dbReference>
<dbReference type="FunFam" id="1.10.1140.10:FF:000001">
    <property type="entry name" value="ATP synthase subunit beta"/>
    <property type="match status" value="1"/>
</dbReference>
<dbReference type="FunFam" id="3.40.50.300:FF:000004">
    <property type="entry name" value="ATP synthase subunit beta"/>
    <property type="match status" value="1"/>
</dbReference>
<dbReference type="Gene3D" id="2.40.10.170">
    <property type="match status" value="1"/>
</dbReference>
<dbReference type="Gene3D" id="1.10.1140.10">
    <property type="entry name" value="Bovine Mitochondrial F1-atpase, Atp Synthase Beta Chain, Chain D, domain 3"/>
    <property type="match status" value="1"/>
</dbReference>
<dbReference type="Gene3D" id="3.40.50.300">
    <property type="entry name" value="P-loop containing nucleotide triphosphate hydrolases"/>
    <property type="match status" value="1"/>
</dbReference>
<dbReference type="HAMAP" id="MF_01347">
    <property type="entry name" value="ATP_synth_beta_bact"/>
    <property type="match status" value="1"/>
</dbReference>
<dbReference type="InterPro" id="IPR003593">
    <property type="entry name" value="AAA+_ATPase"/>
</dbReference>
<dbReference type="InterPro" id="IPR055190">
    <property type="entry name" value="ATP-synt_VA_C"/>
</dbReference>
<dbReference type="InterPro" id="IPR005722">
    <property type="entry name" value="ATP_synth_F1_bsu"/>
</dbReference>
<dbReference type="InterPro" id="IPR020003">
    <property type="entry name" value="ATPase_a/bsu_AS"/>
</dbReference>
<dbReference type="InterPro" id="IPR050053">
    <property type="entry name" value="ATPase_alpha/beta_chains"/>
</dbReference>
<dbReference type="InterPro" id="IPR004100">
    <property type="entry name" value="ATPase_F1/V1/A1_a/bsu_N"/>
</dbReference>
<dbReference type="InterPro" id="IPR036121">
    <property type="entry name" value="ATPase_F1/V1/A1_a/bsu_N_sf"/>
</dbReference>
<dbReference type="InterPro" id="IPR000194">
    <property type="entry name" value="ATPase_F1/V1/A1_a/bsu_nucl-bd"/>
</dbReference>
<dbReference type="InterPro" id="IPR024034">
    <property type="entry name" value="ATPase_F1/V1_b/a_C"/>
</dbReference>
<dbReference type="InterPro" id="IPR027417">
    <property type="entry name" value="P-loop_NTPase"/>
</dbReference>
<dbReference type="NCBIfam" id="TIGR01039">
    <property type="entry name" value="atpD"/>
    <property type="match status" value="1"/>
</dbReference>
<dbReference type="PANTHER" id="PTHR15184">
    <property type="entry name" value="ATP SYNTHASE"/>
    <property type="match status" value="1"/>
</dbReference>
<dbReference type="PANTHER" id="PTHR15184:SF71">
    <property type="entry name" value="ATP SYNTHASE SUBUNIT BETA, MITOCHONDRIAL"/>
    <property type="match status" value="1"/>
</dbReference>
<dbReference type="Pfam" id="PF00006">
    <property type="entry name" value="ATP-synt_ab"/>
    <property type="match status" value="1"/>
</dbReference>
<dbReference type="Pfam" id="PF02874">
    <property type="entry name" value="ATP-synt_ab_N"/>
    <property type="match status" value="1"/>
</dbReference>
<dbReference type="Pfam" id="PF22919">
    <property type="entry name" value="ATP-synt_VA_C"/>
    <property type="match status" value="1"/>
</dbReference>
<dbReference type="SMART" id="SM00382">
    <property type="entry name" value="AAA"/>
    <property type="match status" value="1"/>
</dbReference>
<dbReference type="SUPFAM" id="SSF47917">
    <property type="entry name" value="C-terminal domain of alpha and beta subunits of F1 ATP synthase"/>
    <property type="match status" value="1"/>
</dbReference>
<dbReference type="SUPFAM" id="SSF50615">
    <property type="entry name" value="N-terminal domain of alpha and beta subunits of F1 ATP synthase"/>
    <property type="match status" value="1"/>
</dbReference>
<dbReference type="SUPFAM" id="SSF52540">
    <property type="entry name" value="P-loop containing nucleoside triphosphate hydrolases"/>
    <property type="match status" value="1"/>
</dbReference>
<dbReference type="PROSITE" id="PS00152">
    <property type="entry name" value="ATPASE_ALPHA_BETA"/>
    <property type="match status" value="1"/>
</dbReference>
<organism>
    <name type="scientific">Lactobacillus delbrueckii subsp. bulgaricus (strain ATCC BAA-365 / Lb-18)</name>
    <dbReference type="NCBI Taxonomy" id="321956"/>
    <lineage>
        <taxon>Bacteria</taxon>
        <taxon>Bacillati</taxon>
        <taxon>Bacillota</taxon>
        <taxon>Bacilli</taxon>
        <taxon>Lactobacillales</taxon>
        <taxon>Lactobacillaceae</taxon>
        <taxon>Lactobacillus</taxon>
    </lineage>
</organism>
<protein>
    <recommendedName>
        <fullName evidence="1">ATP synthase subunit beta</fullName>
        <ecNumber evidence="1">7.1.2.2</ecNumber>
    </recommendedName>
    <alternativeName>
        <fullName evidence="1">ATP synthase F1 sector subunit beta</fullName>
    </alternativeName>
    <alternativeName>
        <fullName evidence="1">F-ATPase subunit beta</fullName>
    </alternativeName>
</protein>
<keyword id="KW-0066">ATP synthesis</keyword>
<keyword id="KW-0067">ATP-binding</keyword>
<keyword id="KW-1003">Cell membrane</keyword>
<keyword id="KW-0139">CF(1)</keyword>
<keyword id="KW-0375">Hydrogen ion transport</keyword>
<keyword id="KW-0406">Ion transport</keyword>
<keyword id="KW-0472">Membrane</keyword>
<keyword id="KW-0547">Nucleotide-binding</keyword>
<keyword id="KW-1278">Translocase</keyword>
<keyword id="KW-0813">Transport</keyword>